<keyword id="KW-0963">Cytoplasm</keyword>
<keyword id="KW-0271">Exosome</keyword>
<keyword id="KW-1185">Reference proteome</keyword>
<keyword id="KW-0694">RNA-binding</keyword>
<evidence type="ECO:0000255" key="1">
    <source>
        <dbReference type="HAMAP-Rule" id="MF_00623"/>
    </source>
</evidence>
<accession>Q8ZVM8</accession>
<organism>
    <name type="scientific">Pyrobaculum aerophilum (strain ATCC 51768 / DSM 7523 / JCM 9630 / CIP 104966 / NBRC 100827 / IM2)</name>
    <dbReference type="NCBI Taxonomy" id="178306"/>
    <lineage>
        <taxon>Archaea</taxon>
        <taxon>Thermoproteota</taxon>
        <taxon>Thermoprotei</taxon>
        <taxon>Thermoproteales</taxon>
        <taxon>Thermoproteaceae</taxon>
        <taxon>Pyrobaculum</taxon>
    </lineage>
</organism>
<feature type="chain" id="PRO_0000050151" description="Exosome complex component Rrp4">
    <location>
        <begin position="1"/>
        <end position="235"/>
    </location>
</feature>
<feature type="domain" description="S1 motif" evidence="1">
    <location>
        <begin position="63"/>
        <end position="137"/>
    </location>
</feature>
<feature type="domain" description="KH" evidence="1">
    <location>
        <begin position="147"/>
        <end position="203"/>
    </location>
</feature>
<name>RRP4_PYRAE</name>
<reference key="1">
    <citation type="journal article" date="2002" name="Proc. Natl. Acad. Sci. U.S.A.">
        <title>Genome sequence of the hyperthermophilic crenarchaeon Pyrobaculum aerophilum.</title>
        <authorList>
            <person name="Fitz-Gibbon S.T."/>
            <person name="Ladner H."/>
            <person name="Kim U.-J."/>
            <person name="Stetter K.O."/>
            <person name="Simon M.I."/>
            <person name="Miller J.H."/>
        </authorList>
    </citation>
    <scope>NUCLEOTIDE SEQUENCE [LARGE SCALE GENOMIC DNA]</scope>
    <source>
        <strain>ATCC 51768 / DSM 7523 / JCM 9630 / CIP 104966 / NBRC 100827 / IM2</strain>
    </source>
</reference>
<proteinExistence type="inferred from homology"/>
<gene>
    <name evidence="1" type="primary">rrp4</name>
    <name type="ordered locus">PAE2208</name>
</gene>
<sequence>MYYVTPRQLVFPGDVIATADSKVEGPVYLDNGKYRSLVVGLVEFREDVVVVVPLEGTYKPKKGDLVIGYVTDVLATGWEVDVRSFMPAYLPVGEALHRHVDLETTPLTTFLNIGDVVVAKVKDVDLTDEYPIILTLKDEKVGKVESGTVVEITPVKVPRVIGKRGSMLNTLMELGCDIVVGQNGRIWVKCKDPRDEVFLASLIRKIEAESHVMGLTDRIRAEIENYKTSKQQGTV</sequence>
<comment type="function">
    <text evidence="1">Non-catalytic component of the exosome, which is a complex involved in RNA degradation. Increases the RNA binding and the efficiency of RNA degradation. Confers strong poly(A) specificity to the exosome.</text>
</comment>
<comment type="subunit">
    <text evidence="1">Component of the archaeal exosome complex. Forms a trimer of Rrp4 and/or Csl4 subunits. The trimer associates with a hexameric ring-like arrangement composed of 3 Rrp41-Rrp42 heterodimers.</text>
</comment>
<comment type="subcellular location">
    <subcellularLocation>
        <location evidence="1">Cytoplasm</location>
    </subcellularLocation>
</comment>
<comment type="similarity">
    <text evidence="1">Belongs to the RRP4 family.</text>
</comment>
<dbReference type="EMBL" id="AE009441">
    <property type="protein sequence ID" value="AAL64028.1"/>
    <property type="molecule type" value="Genomic_DNA"/>
</dbReference>
<dbReference type="RefSeq" id="WP_011008496.1">
    <property type="nucleotide sequence ID" value="NC_003364.1"/>
</dbReference>
<dbReference type="SMR" id="Q8ZVM8"/>
<dbReference type="FunCoup" id="Q8ZVM8">
    <property type="interactions" value="142"/>
</dbReference>
<dbReference type="STRING" id="178306.PAE2208"/>
<dbReference type="EnsemblBacteria" id="AAL64028">
    <property type="protein sequence ID" value="AAL64028"/>
    <property type="gene ID" value="PAE2208"/>
</dbReference>
<dbReference type="GeneID" id="1464362"/>
<dbReference type="KEGG" id="pai:PAE2208"/>
<dbReference type="PATRIC" id="fig|178306.9.peg.1640"/>
<dbReference type="eggNOG" id="arCOG00678">
    <property type="taxonomic scope" value="Archaea"/>
</dbReference>
<dbReference type="HOGENOM" id="CLU_071769_0_0_2"/>
<dbReference type="InParanoid" id="Q8ZVM8"/>
<dbReference type="Proteomes" id="UP000002439">
    <property type="component" value="Chromosome"/>
</dbReference>
<dbReference type="GO" id="GO:0005737">
    <property type="term" value="C:cytoplasm"/>
    <property type="evidence" value="ECO:0007669"/>
    <property type="project" value="UniProtKB-SubCell"/>
</dbReference>
<dbReference type="GO" id="GO:0000178">
    <property type="term" value="C:exosome (RNase complex)"/>
    <property type="evidence" value="ECO:0000318"/>
    <property type="project" value="GO_Central"/>
</dbReference>
<dbReference type="GO" id="GO:0008143">
    <property type="term" value="F:poly(A) binding"/>
    <property type="evidence" value="ECO:0007669"/>
    <property type="project" value="InterPro"/>
</dbReference>
<dbReference type="GO" id="GO:0003723">
    <property type="term" value="F:RNA binding"/>
    <property type="evidence" value="ECO:0000318"/>
    <property type="project" value="GO_Central"/>
</dbReference>
<dbReference type="GO" id="GO:0071034">
    <property type="term" value="P:CUT catabolic process"/>
    <property type="evidence" value="ECO:0000318"/>
    <property type="project" value="GO_Central"/>
</dbReference>
<dbReference type="GO" id="GO:0000467">
    <property type="term" value="P:exonucleolytic trimming to generate mature 3'-end of 5.8S rRNA from tricistronic rRNA transcript (SSU-rRNA, 5.8S rRNA, LSU-rRNA)"/>
    <property type="evidence" value="ECO:0000318"/>
    <property type="project" value="GO_Central"/>
</dbReference>
<dbReference type="GO" id="GO:0071051">
    <property type="term" value="P:poly(A)-dependent snoRNA 3'-end processing"/>
    <property type="evidence" value="ECO:0000318"/>
    <property type="project" value="GO_Central"/>
</dbReference>
<dbReference type="GO" id="GO:0006401">
    <property type="term" value="P:RNA catabolic process"/>
    <property type="evidence" value="ECO:0007669"/>
    <property type="project" value="UniProtKB-UniRule"/>
</dbReference>
<dbReference type="GO" id="GO:0034475">
    <property type="term" value="P:U4 snRNA 3'-end processing"/>
    <property type="evidence" value="ECO:0000318"/>
    <property type="project" value="GO_Central"/>
</dbReference>
<dbReference type="CDD" id="cd22524">
    <property type="entry name" value="KH-I_Rrp4_prokar"/>
    <property type="match status" value="1"/>
</dbReference>
<dbReference type="FunFam" id="2.40.50.100:FF:000082">
    <property type="entry name" value="Exosome complex component Rrp4"/>
    <property type="match status" value="1"/>
</dbReference>
<dbReference type="FunFam" id="3.30.1370.10:FF:000095">
    <property type="entry name" value="Exosome complex component Rrp4"/>
    <property type="match status" value="1"/>
</dbReference>
<dbReference type="FunFam" id="2.40.50.140:FF:000127">
    <property type="entry name" value="Exosome complex component RRP40"/>
    <property type="match status" value="1"/>
</dbReference>
<dbReference type="Gene3D" id="2.40.50.100">
    <property type="match status" value="1"/>
</dbReference>
<dbReference type="Gene3D" id="3.30.1370.10">
    <property type="entry name" value="K Homology domain, type 1"/>
    <property type="match status" value="1"/>
</dbReference>
<dbReference type="Gene3D" id="2.40.50.140">
    <property type="entry name" value="Nucleic acid-binding proteins"/>
    <property type="match status" value="1"/>
</dbReference>
<dbReference type="HAMAP" id="MF_00623">
    <property type="entry name" value="Exosome_Rrp4"/>
    <property type="match status" value="1"/>
</dbReference>
<dbReference type="InterPro" id="IPR026699">
    <property type="entry name" value="Exosome_RNA_bind1/RRP40/RRP4"/>
</dbReference>
<dbReference type="InterPro" id="IPR004088">
    <property type="entry name" value="KH_dom_type_1"/>
</dbReference>
<dbReference type="InterPro" id="IPR036612">
    <property type="entry name" value="KH_dom_type_1_sf"/>
</dbReference>
<dbReference type="InterPro" id="IPR012340">
    <property type="entry name" value="NA-bd_OB-fold"/>
</dbReference>
<dbReference type="InterPro" id="IPR023474">
    <property type="entry name" value="Rrp4"/>
</dbReference>
<dbReference type="InterPro" id="IPR054371">
    <property type="entry name" value="RRP4_N"/>
</dbReference>
<dbReference type="InterPro" id="IPR048565">
    <property type="entry name" value="RRP4_S1"/>
</dbReference>
<dbReference type="InterPro" id="IPR003029">
    <property type="entry name" value="S1_domain"/>
</dbReference>
<dbReference type="NCBIfam" id="NF003181">
    <property type="entry name" value="PRK04163.1-1"/>
    <property type="match status" value="1"/>
</dbReference>
<dbReference type="PANTHER" id="PTHR21321:SF4">
    <property type="entry name" value="EXOSOME COMPLEX COMPONENT RRP4"/>
    <property type="match status" value="1"/>
</dbReference>
<dbReference type="PANTHER" id="PTHR21321">
    <property type="entry name" value="PNAS-3 RELATED"/>
    <property type="match status" value="1"/>
</dbReference>
<dbReference type="Pfam" id="PF22625">
    <property type="entry name" value="ECR1_N_2"/>
    <property type="match status" value="1"/>
</dbReference>
<dbReference type="Pfam" id="PF15985">
    <property type="entry name" value="KH_6"/>
    <property type="match status" value="1"/>
</dbReference>
<dbReference type="Pfam" id="PF21266">
    <property type="entry name" value="RRP4_S1"/>
    <property type="match status" value="1"/>
</dbReference>
<dbReference type="SMART" id="SM00316">
    <property type="entry name" value="S1"/>
    <property type="match status" value="1"/>
</dbReference>
<dbReference type="SUPFAM" id="SSF54791">
    <property type="entry name" value="Eukaryotic type KH-domain (KH-domain type I)"/>
    <property type="match status" value="1"/>
</dbReference>
<dbReference type="SUPFAM" id="SSF50249">
    <property type="entry name" value="Nucleic acid-binding proteins"/>
    <property type="match status" value="1"/>
</dbReference>
<dbReference type="SUPFAM" id="SSF110324">
    <property type="entry name" value="Ribosomal L27 protein-like"/>
    <property type="match status" value="1"/>
</dbReference>
<dbReference type="PROSITE" id="PS50126">
    <property type="entry name" value="S1"/>
    <property type="match status" value="1"/>
</dbReference>
<protein>
    <recommendedName>
        <fullName evidence="1">Exosome complex component Rrp4</fullName>
    </recommendedName>
</protein>